<organism>
    <name type="scientific">Dictyostelium discoideum</name>
    <name type="common">Social amoeba</name>
    <dbReference type="NCBI Taxonomy" id="44689"/>
    <lineage>
        <taxon>Eukaryota</taxon>
        <taxon>Amoebozoa</taxon>
        <taxon>Evosea</taxon>
        <taxon>Eumycetozoa</taxon>
        <taxon>Dictyostelia</taxon>
        <taxon>Dictyosteliales</taxon>
        <taxon>Dictyosteliaceae</taxon>
        <taxon>Dictyostelium</taxon>
    </lineage>
</organism>
<comment type="function">
    <text evidence="3">The small GTPases Rab are key regulators of intracellular membrane trafficking, from the formation of transport vesicles to their fusion with membranes. Rabs cycle between active GTP-bound and inactive GDP-bound states. In their active state, drive transport of vesicular carriers from donor organelles to acceptor organelles to regulate the membrane traffic that maintains organelle identity and morphology.</text>
</comment>
<comment type="catalytic activity">
    <reaction evidence="2">
        <text>GTP + H2O = GDP + phosphate + H(+)</text>
        <dbReference type="Rhea" id="RHEA:19669"/>
        <dbReference type="ChEBI" id="CHEBI:15377"/>
        <dbReference type="ChEBI" id="CHEBI:15378"/>
        <dbReference type="ChEBI" id="CHEBI:37565"/>
        <dbReference type="ChEBI" id="CHEBI:43474"/>
        <dbReference type="ChEBI" id="CHEBI:58189"/>
        <dbReference type="EC" id="3.6.5.2"/>
    </reaction>
    <physiologicalReaction direction="left-to-right" evidence="2">
        <dbReference type="Rhea" id="RHEA:19670"/>
    </physiologicalReaction>
</comment>
<comment type="activity regulation">
    <text evidence="3">Regulated by guanine nucleotide exchange factors (GEFs) which promote the exchange of bound GDP for free GTP, GTPase activating proteins (GAPs) which increase the GTP hydrolysis activity, and GDP dissociation inhibitors which inhibit the dissociation of the nucleotide from the GTPase.</text>
</comment>
<comment type="subcellular location">
    <subcellularLocation>
        <location evidence="6">Cell membrane</location>
        <topology evidence="6">Lipid-anchor</topology>
        <orientation evidence="6">Cytoplasmic side</orientation>
    </subcellularLocation>
</comment>
<comment type="similarity">
    <text evidence="6">Belongs to the small GTPase superfamily. Rab family.</text>
</comment>
<feature type="chain" id="PRO_0000121271" description="Ras-related protein Rab-2A">
    <location>
        <begin position="1"/>
        <end position="207"/>
    </location>
</feature>
<feature type="region of interest" description="Disordered" evidence="5">
    <location>
        <begin position="187"/>
        <end position="207"/>
    </location>
</feature>
<feature type="short sequence motif" description="Effector region" evidence="1">
    <location>
        <begin position="34"/>
        <end position="42"/>
    </location>
</feature>
<feature type="binding site" evidence="3">
    <location>
        <begin position="12"/>
        <end position="20"/>
    </location>
    <ligand>
        <name>GTP</name>
        <dbReference type="ChEBI" id="CHEBI:37565"/>
    </ligand>
</feature>
<feature type="binding site" evidence="4">
    <location>
        <begin position="60"/>
        <end position="64"/>
    </location>
    <ligand>
        <name>GTP</name>
        <dbReference type="ChEBI" id="CHEBI:37565"/>
    </ligand>
</feature>
<feature type="binding site" evidence="3">
    <location>
        <begin position="118"/>
        <end position="121"/>
    </location>
    <ligand>
        <name>GTP</name>
        <dbReference type="ChEBI" id="CHEBI:37565"/>
    </ligand>
</feature>
<feature type="binding site" evidence="3">
    <location>
        <begin position="148"/>
        <end position="150"/>
    </location>
    <ligand>
        <name>GTP</name>
        <dbReference type="ChEBI" id="CHEBI:37565"/>
    </ligand>
</feature>
<feature type="lipid moiety-binding region" description="S-geranylgeranyl cysteine" evidence="1">
    <location>
        <position position="205"/>
    </location>
</feature>
<feature type="lipid moiety-binding region" description="S-geranylgeranyl cysteine" evidence="1">
    <location>
        <position position="206"/>
    </location>
</feature>
<protein>
    <recommendedName>
        <fullName>Ras-related protein Rab-2A</fullName>
        <ecNumber evidence="2">3.6.5.2</ecNumber>
    </recommendedName>
</protein>
<sequence>MYSFLFKYIIIGDTGVGKSCLLLQFTDKRFQPVHDLTIGVEFGARMITIDNKAIKLQIWDTAGQESFRSITRSYYRGSAGALLVYDITRRDTFNHLTCWLKDARSYANSNMTIILIGNKSDMESKRAVSYEEGRQFADENGLIFLETSAKTASNVEEAFVNTASKIYEKIQKGDFDINNESFGIKLGAPTSKQDGTDQKPAGGGCCK</sequence>
<accession>P36409</accession>
<accession>Q54DF6</accession>
<keyword id="KW-1003">Cell membrane</keyword>
<keyword id="KW-0342">GTP-binding</keyword>
<keyword id="KW-0378">Hydrolase</keyword>
<keyword id="KW-0449">Lipoprotein</keyword>
<keyword id="KW-0472">Membrane</keyword>
<keyword id="KW-0547">Nucleotide-binding</keyword>
<keyword id="KW-0636">Prenylation</keyword>
<keyword id="KW-1185">Reference proteome</keyword>
<name>RAB2A_DICDI</name>
<reference key="1">
    <citation type="journal article" date="2005" name="Nature">
        <title>The genome of the social amoeba Dictyostelium discoideum.</title>
        <authorList>
            <person name="Eichinger L."/>
            <person name="Pachebat J.A."/>
            <person name="Gloeckner G."/>
            <person name="Rajandream M.A."/>
            <person name="Sucgang R."/>
            <person name="Berriman M."/>
            <person name="Song J."/>
            <person name="Olsen R."/>
            <person name="Szafranski K."/>
            <person name="Xu Q."/>
            <person name="Tunggal B."/>
            <person name="Kummerfeld S."/>
            <person name="Madera M."/>
            <person name="Konfortov B.A."/>
            <person name="Rivero F."/>
            <person name="Bankier A.T."/>
            <person name="Lehmann R."/>
            <person name="Hamlin N."/>
            <person name="Davies R."/>
            <person name="Gaudet P."/>
            <person name="Fey P."/>
            <person name="Pilcher K."/>
            <person name="Chen G."/>
            <person name="Saunders D."/>
            <person name="Sodergren E.J."/>
            <person name="Davis P."/>
            <person name="Kerhornou A."/>
            <person name="Nie X."/>
            <person name="Hall N."/>
            <person name="Anjard C."/>
            <person name="Hemphill L."/>
            <person name="Bason N."/>
            <person name="Farbrother P."/>
            <person name="Desany B."/>
            <person name="Just E."/>
            <person name="Morio T."/>
            <person name="Rost R."/>
            <person name="Churcher C.M."/>
            <person name="Cooper J."/>
            <person name="Haydock S."/>
            <person name="van Driessche N."/>
            <person name="Cronin A."/>
            <person name="Goodhead I."/>
            <person name="Muzny D.M."/>
            <person name="Mourier T."/>
            <person name="Pain A."/>
            <person name="Lu M."/>
            <person name="Harper D."/>
            <person name="Lindsay R."/>
            <person name="Hauser H."/>
            <person name="James K.D."/>
            <person name="Quiles M."/>
            <person name="Madan Babu M."/>
            <person name="Saito T."/>
            <person name="Buchrieser C."/>
            <person name="Wardroper A."/>
            <person name="Felder M."/>
            <person name="Thangavelu M."/>
            <person name="Johnson D."/>
            <person name="Knights A."/>
            <person name="Loulseged H."/>
            <person name="Mungall K.L."/>
            <person name="Oliver K."/>
            <person name="Price C."/>
            <person name="Quail M.A."/>
            <person name="Urushihara H."/>
            <person name="Hernandez J."/>
            <person name="Rabbinowitsch E."/>
            <person name="Steffen D."/>
            <person name="Sanders M."/>
            <person name="Ma J."/>
            <person name="Kohara Y."/>
            <person name="Sharp S."/>
            <person name="Simmonds M.N."/>
            <person name="Spiegler S."/>
            <person name="Tivey A."/>
            <person name="Sugano S."/>
            <person name="White B."/>
            <person name="Walker D."/>
            <person name="Woodward J.R."/>
            <person name="Winckler T."/>
            <person name="Tanaka Y."/>
            <person name="Shaulsky G."/>
            <person name="Schleicher M."/>
            <person name="Weinstock G.M."/>
            <person name="Rosenthal A."/>
            <person name="Cox E.C."/>
            <person name="Chisholm R.L."/>
            <person name="Gibbs R.A."/>
            <person name="Loomis W.F."/>
            <person name="Platzer M."/>
            <person name="Kay R.R."/>
            <person name="Williams J.G."/>
            <person name="Dear P.H."/>
            <person name="Noegel A.A."/>
            <person name="Barrell B.G."/>
            <person name="Kuspa A."/>
        </authorList>
    </citation>
    <scope>NUCLEOTIDE SEQUENCE [LARGE SCALE GENOMIC DNA]</scope>
    <source>
        <strain>AX4</strain>
    </source>
</reference>
<reference key="2">
    <citation type="submission" date="1993-10" db="EMBL/GenBank/DDBJ databases">
        <title>Cloning and characterization of a rab 2-like GTPase in Dictyostelium discoideum.</title>
        <authorList>
            <person name="Bush J.M. IV"/>
            <person name="Nolta K."/>
            <person name="Rodriguez-Paris J."/>
            <person name="Temesvari L."/>
            <person name="Ruscetti T."/>
            <person name="Steck T."/>
            <person name="Cardelli J.A."/>
        </authorList>
    </citation>
    <scope>NUCLEOTIDE SEQUENCE [MRNA] OF 9-207</scope>
    <source>
        <strain>AX3</strain>
    </source>
</reference>
<gene>
    <name type="primary">rab2A</name>
    <name type="synonym">rab2</name>
    <name type="ORF">DDB_G0292268</name>
</gene>
<dbReference type="EC" id="3.6.5.2" evidence="2"/>
<dbReference type="EMBL" id="AAFI02000189">
    <property type="protein sequence ID" value="EAL61258.1"/>
    <property type="molecule type" value="Genomic_DNA"/>
</dbReference>
<dbReference type="EMBL" id="U02926">
    <property type="protein sequence ID" value="AAA80150.1"/>
    <property type="molecule type" value="mRNA"/>
</dbReference>
<dbReference type="RefSeq" id="XP_629685.1">
    <property type="nucleotide sequence ID" value="XM_629683.1"/>
</dbReference>
<dbReference type="SMR" id="P36409"/>
<dbReference type="FunCoup" id="P36409">
    <property type="interactions" value="432"/>
</dbReference>
<dbReference type="STRING" id="44689.P36409"/>
<dbReference type="PaxDb" id="44689-DDB0216191"/>
<dbReference type="EnsemblProtists" id="EAL61258">
    <property type="protein sequence ID" value="EAL61258"/>
    <property type="gene ID" value="DDB_G0292268"/>
</dbReference>
<dbReference type="GeneID" id="8628601"/>
<dbReference type="KEGG" id="ddi:DDB_G0292268"/>
<dbReference type="dictyBase" id="DDB_G0292268">
    <property type="gene designation" value="rab2A"/>
</dbReference>
<dbReference type="VEuPathDB" id="AmoebaDB:DDB_G0292268"/>
<dbReference type="eggNOG" id="KOG0098">
    <property type="taxonomic scope" value="Eukaryota"/>
</dbReference>
<dbReference type="HOGENOM" id="CLU_041217_23_1_1"/>
<dbReference type="InParanoid" id="P36409"/>
<dbReference type="OMA" id="FNHLTCW"/>
<dbReference type="PhylomeDB" id="P36409"/>
<dbReference type="Reactome" id="R-DDI-6811438">
    <property type="pathway name" value="Intra-Golgi traffic"/>
</dbReference>
<dbReference type="Reactome" id="R-DDI-8873719">
    <property type="pathway name" value="RAB geranylgeranylation"/>
</dbReference>
<dbReference type="PRO" id="PR:P36409"/>
<dbReference type="Proteomes" id="UP000002195">
    <property type="component" value="Chromosome 6"/>
</dbReference>
<dbReference type="GO" id="GO:0031164">
    <property type="term" value="C:contractile vacuolar membrane"/>
    <property type="evidence" value="ECO:0000314"/>
    <property type="project" value="dictyBase"/>
</dbReference>
<dbReference type="GO" id="GO:0005794">
    <property type="term" value="C:Golgi apparatus"/>
    <property type="evidence" value="ECO:0000318"/>
    <property type="project" value="GO_Central"/>
</dbReference>
<dbReference type="GO" id="GO:0000139">
    <property type="term" value="C:Golgi membrane"/>
    <property type="evidence" value="ECO:0000314"/>
    <property type="project" value="dictyBase"/>
</dbReference>
<dbReference type="GO" id="GO:0005811">
    <property type="term" value="C:lipid droplet"/>
    <property type="evidence" value="ECO:0007005"/>
    <property type="project" value="dictyBase"/>
</dbReference>
<dbReference type="GO" id="GO:0140220">
    <property type="term" value="C:pathogen-containing vacuole"/>
    <property type="evidence" value="ECO:0007005"/>
    <property type="project" value="dictyBase"/>
</dbReference>
<dbReference type="GO" id="GO:0005886">
    <property type="term" value="C:plasma membrane"/>
    <property type="evidence" value="ECO:0007669"/>
    <property type="project" value="UniProtKB-SubCell"/>
</dbReference>
<dbReference type="GO" id="GO:0005525">
    <property type="term" value="F:GTP binding"/>
    <property type="evidence" value="ECO:0000318"/>
    <property type="project" value="GO_Central"/>
</dbReference>
<dbReference type="GO" id="GO:0003924">
    <property type="term" value="F:GTPase activity"/>
    <property type="evidence" value="ECO:0000318"/>
    <property type="project" value="GO_Central"/>
</dbReference>
<dbReference type="GO" id="GO:0048102">
    <property type="term" value="P:autophagic cell death"/>
    <property type="evidence" value="ECO:0000315"/>
    <property type="project" value="dictyBase"/>
</dbReference>
<dbReference type="GO" id="GO:0007030">
    <property type="term" value="P:Golgi organization"/>
    <property type="evidence" value="ECO:0000250"/>
    <property type="project" value="UniProtKB"/>
</dbReference>
<dbReference type="GO" id="GO:0006971">
    <property type="term" value="P:hypotonic response"/>
    <property type="evidence" value="ECO:0007007"/>
    <property type="project" value="dictyBase"/>
</dbReference>
<dbReference type="GO" id="GO:0006909">
    <property type="term" value="P:phagocytosis"/>
    <property type="evidence" value="ECO:0000315"/>
    <property type="project" value="dictyBase"/>
</dbReference>
<dbReference type="GO" id="GO:0047484">
    <property type="term" value="P:regulation of response to osmotic stress"/>
    <property type="evidence" value="ECO:0000315"/>
    <property type="project" value="dictyBase"/>
</dbReference>
<dbReference type="GO" id="GO:0060627">
    <property type="term" value="P:regulation of vesicle-mediated transport"/>
    <property type="evidence" value="ECO:0000315"/>
    <property type="project" value="dictyBase"/>
</dbReference>
<dbReference type="GO" id="GO:0030587">
    <property type="term" value="P:sorocarp development"/>
    <property type="evidence" value="ECO:0000315"/>
    <property type="project" value="dictyBase"/>
</dbReference>
<dbReference type="GO" id="GO:0016192">
    <property type="term" value="P:vesicle-mediated transport"/>
    <property type="evidence" value="ECO:0000318"/>
    <property type="project" value="GO_Central"/>
</dbReference>
<dbReference type="CDD" id="cd01866">
    <property type="entry name" value="Rab2"/>
    <property type="match status" value="1"/>
</dbReference>
<dbReference type="FunFam" id="3.40.50.300:FF:000263">
    <property type="entry name" value="Ras-related protein RABB1c"/>
    <property type="match status" value="1"/>
</dbReference>
<dbReference type="Gene3D" id="3.40.50.300">
    <property type="entry name" value="P-loop containing nucleotide triphosphate hydrolases"/>
    <property type="match status" value="1"/>
</dbReference>
<dbReference type="InterPro" id="IPR027417">
    <property type="entry name" value="P-loop_NTPase"/>
</dbReference>
<dbReference type="InterPro" id="IPR050209">
    <property type="entry name" value="Rab_GTPases_membrane_traffic"/>
</dbReference>
<dbReference type="InterPro" id="IPR005225">
    <property type="entry name" value="Small_GTP-bd"/>
</dbReference>
<dbReference type="InterPro" id="IPR001806">
    <property type="entry name" value="Small_GTPase"/>
</dbReference>
<dbReference type="NCBIfam" id="TIGR00231">
    <property type="entry name" value="small_GTP"/>
    <property type="match status" value="1"/>
</dbReference>
<dbReference type="PANTHER" id="PTHR47979">
    <property type="entry name" value="DRAB11-RELATED"/>
    <property type="match status" value="1"/>
</dbReference>
<dbReference type="Pfam" id="PF00071">
    <property type="entry name" value="Ras"/>
    <property type="match status" value="1"/>
</dbReference>
<dbReference type="PRINTS" id="PR00449">
    <property type="entry name" value="RASTRNSFRMNG"/>
</dbReference>
<dbReference type="SMART" id="SM00175">
    <property type="entry name" value="RAB"/>
    <property type="match status" value="1"/>
</dbReference>
<dbReference type="SMART" id="SM00176">
    <property type="entry name" value="RAN"/>
    <property type="match status" value="1"/>
</dbReference>
<dbReference type="SMART" id="SM00173">
    <property type="entry name" value="RAS"/>
    <property type="match status" value="1"/>
</dbReference>
<dbReference type="SMART" id="SM00174">
    <property type="entry name" value="RHO"/>
    <property type="match status" value="1"/>
</dbReference>
<dbReference type="SUPFAM" id="SSF52540">
    <property type="entry name" value="P-loop containing nucleoside triphosphate hydrolases"/>
    <property type="match status" value="1"/>
</dbReference>
<dbReference type="PROSITE" id="PS51419">
    <property type="entry name" value="RAB"/>
    <property type="match status" value="1"/>
</dbReference>
<evidence type="ECO:0000250" key="1"/>
<evidence type="ECO:0000250" key="2">
    <source>
        <dbReference type="UniProtKB" id="P53994"/>
    </source>
</evidence>
<evidence type="ECO:0000250" key="3">
    <source>
        <dbReference type="UniProtKB" id="P61019"/>
    </source>
</evidence>
<evidence type="ECO:0000250" key="4">
    <source>
        <dbReference type="UniProtKB" id="P62820"/>
    </source>
</evidence>
<evidence type="ECO:0000256" key="5">
    <source>
        <dbReference type="SAM" id="MobiDB-lite"/>
    </source>
</evidence>
<evidence type="ECO:0000305" key="6"/>
<proteinExistence type="evidence at transcript level"/>